<reference key="1">
    <citation type="journal article" date="1996" name="DNA Res.">
        <title>Sequence analysis of the genome of the unicellular cyanobacterium Synechocystis sp. strain PCC6803. II. Sequence determination of the entire genome and assignment of potential protein-coding regions.</title>
        <authorList>
            <person name="Kaneko T."/>
            <person name="Sato S."/>
            <person name="Kotani H."/>
            <person name="Tanaka A."/>
            <person name="Asamizu E."/>
            <person name="Nakamura Y."/>
            <person name="Miyajima N."/>
            <person name="Hirosawa M."/>
            <person name="Sugiura M."/>
            <person name="Sasamoto S."/>
            <person name="Kimura T."/>
            <person name="Hosouchi T."/>
            <person name="Matsuno A."/>
            <person name="Muraki A."/>
            <person name="Nakazaki N."/>
            <person name="Naruo K."/>
            <person name="Okumura S."/>
            <person name="Shimpo S."/>
            <person name="Takeuchi C."/>
            <person name="Wada T."/>
            <person name="Watanabe A."/>
            <person name="Yamada M."/>
            <person name="Yasuda M."/>
            <person name="Tabata S."/>
        </authorList>
    </citation>
    <scope>NUCLEOTIDE SEQUENCE [LARGE SCALE GENOMIC DNA]</scope>
    <source>
        <strain>ATCC 27184 / PCC 6803 / Kazusa</strain>
    </source>
</reference>
<reference key="2">
    <citation type="journal article" date="2019" name="Nat. Plants">
        <title>Structural mechanism of the active bicarbonate transporter from cyanobacteria.</title>
        <authorList>
            <person name="Wang C."/>
            <person name="Sun B."/>
            <person name="Zhang X."/>
            <person name="Huang X."/>
            <person name="Zhang M."/>
            <person name="Guo H."/>
            <person name="Chen X."/>
            <person name="Huang F."/>
            <person name="Chen T."/>
            <person name="Mi H."/>
            <person name="Yu F."/>
            <person name="Liu L.N."/>
            <person name="Zhang P."/>
        </authorList>
    </citation>
    <scope>X-RAY CRYSTALLOGRAPHY (2.20 ANGSTROMS) OF2-393 AND 409-564 IN COMPLEX WITH BICARBONATE</scope>
    <scope>FUNCTION</scope>
    <scope>HOMODIMERIZATION</scope>
    <scope>SUBCELLULAR LOCATION</scope>
    <scope>TOPOLOGY</scope>
    <scope>MUTAGENESIS OF THR-69; ASP-258; THR-262; THR-302; ALA-471; LEU-476; ALA-486 AND LEU-490</scope>
</reference>
<accession>Q55415</accession>
<gene>
    <name evidence="3" type="primary">bicA</name>
    <name evidence="5" type="ordered locus">sll0834</name>
</gene>
<comment type="function">
    <text evidence="2">Low affinity, high-flux Na(+)-dependent bicarbonate transporter (PubMed:31712753). Involved in carbone dioxide-concentrating mechanisms (CCMs) that accumulate CO(2) and improve photosynthetic carbon fixation (PubMed:31712753).</text>
</comment>
<comment type="subunit">
    <text evidence="2">Forms homodimers through the STAS cytoplasmic domain.</text>
</comment>
<comment type="subcellular location">
    <subcellularLocation>
        <location evidence="2">Cell inner membrane</location>
        <topology evidence="2">Multi-pass membrane protein</topology>
    </subcellularLocation>
</comment>
<comment type="similarity">
    <text evidence="4">Belongs to the SLC26A/SulP transporter (TC 2.A.53) family.</text>
</comment>
<dbReference type="EMBL" id="BA000022">
    <property type="protein sequence ID" value="BAA10512.1"/>
    <property type="molecule type" value="Genomic_DNA"/>
</dbReference>
<dbReference type="PIR" id="S75777">
    <property type="entry name" value="S75777"/>
</dbReference>
<dbReference type="PDB" id="6KI1">
    <property type="method" value="X-ray"/>
    <property type="resolution" value="2.81 A"/>
    <property type="chains" value="A/B=2-393"/>
</dbReference>
<dbReference type="PDB" id="6KI2">
    <property type="method" value="X-ray"/>
    <property type="resolution" value="2.20 A"/>
    <property type="chains" value="A/B=409-564"/>
</dbReference>
<dbReference type="PDBsum" id="6KI1"/>
<dbReference type="PDBsum" id="6KI2"/>
<dbReference type="SMR" id="Q55415"/>
<dbReference type="FunCoup" id="Q55415">
    <property type="interactions" value="210"/>
</dbReference>
<dbReference type="STRING" id="1148.gene:10500016"/>
<dbReference type="PaxDb" id="1148-1001268"/>
<dbReference type="EnsemblBacteria" id="BAA10512">
    <property type="protein sequence ID" value="BAA10512"/>
    <property type="gene ID" value="BAA10512"/>
</dbReference>
<dbReference type="KEGG" id="syn:sll0834"/>
<dbReference type="eggNOG" id="COG0659">
    <property type="taxonomic scope" value="Bacteria"/>
</dbReference>
<dbReference type="InParanoid" id="Q55415"/>
<dbReference type="PhylomeDB" id="Q55415"/>
<dbReference type="Proteomes" id="UP000001425">
    <property type="component" value="Chromosome"/>
</dbReference>
<dbReference type="GO" id="GO:0005886">
    <property type="term" value="C:plasma membrane"/>
    <property type="evidence" value="ECO:0000318"/>
    <property type="project" value="GO_Central"/>
</dbReference>
<dbReference type="GO" id="GO:0046872">
    <property type="term" value="F:metal ion binding"/>
    <property type="evidence" value="ECO:0007669"/>
    <property type="project" value="UniProtKB-KW"/>
</dbReference>
<dbReference type="GO" id="GO:0006814">
    <property type="term" value="P:sodium ion transport"/>
    <property type="evidence" value="ECO:0007669"/>
    <property type="project" value="UniProtKB-KW"/>
</dbReference>
<dbReference type="GO" id="GO:0055085">
    <property type="term" value="P:transmembrane transport"/>
    <property type="evidence" value="ECO:0007669"/>
    <property type="project" value="InterPro"/>
</dbReference>
<dbReference type="CDD" id="cd07042">
    <property type="entry name" value="STAS_SulP_like_sulfate_transporter"/>
    <property type="match status" value="1"/>
</dbReference>
<dbReference type="FunFam" id="3.30.750.24:FF:000048">
    <property type="entry name" value="Sulfate permease family protein"/>
    <property type="match status" value="1"/>
</dbReference>
<dbReference type="Gene3D" id="3.30.750.24">
    <property type="entry name" value="STAS domain"/>
    <property type="match status" value="1"/>
</dbReference>
<dbReference type="InterPro" id="IPR011547">
    <property type="entry name" value="SLC26A/SulP_dom"/>
</dbReference>
<dbReference type="InterPro" id="IPR001902">
    <property type="entry name" value="SLC26A/SulP_fam"/>
</dbReference>
<dbReference type="InterPro" id="IPR002645">
    <property type="entry name" value="STAS_dom"/>
</dbReference>
<dbReference type="InterPro" id="IPR036513">
    <property type="entry name" value="STAS_dom_sf"/>
</dbReference>
<dbReference type="PANTHER" id="PTHR11814">
    <property type="entry name" value="SULFATE TRANSPORTER"/>
    <property type="match status" value="1"/>
</dbReference>
<dbReference type="Pfam" id="PF01740">
    <property type="entry name" value="STAS"/>
    <property type="match status" value="1"/>
</dbReference>
<dbReference type="Pfam" id="PF00916">
    <property type="entry name" value="Sulfate_transp"/>
    <property type="match status" value="1"/>
</dbReference>
<dbReference type="SUPFAM" id="SSF52091">
    <property type="entry name" value="SpoIIaa-like"/>
    <property type="match status" value="1"/>
</dbReference>
<dbReference type="PROSITE" id="PS50801">
    <property type="entry name" value="STAS"/>
    <property type="match status" value="1"/>
</dbReference>
<organism>
    <name type="scientific">Synechocystis sp. (strain ATCC 27184 / PCC 6803 / Kazusa)</name>
    <dbReference type="NCBI Taxonomy" id="1111708"/>
    <lineage>
        <taxon>Bacteria</taxon>
        <taxon>Bacillati</taxon>
        <taxon>Cyanobacteriota</taxon>
        <taxon>Cyanophyceae</taxon>
        <taxon>Synechococcales</taxon>
        <taxon>Merismopediaceae</taxon>
        <taxon>Synechocystis</taxon>
    </lineage>
</organism>
<keyword id="KW-0002">3D-structure</keyword>
<keyword id="KW-0997">Cell inner membrane</keyword>
<keyword id="KW-1003">Cell membrane</keyword>
<keyword id="KW-0406">Ion transport</keyword>
<keyword id="KW-0472">Membrane</keyword>
<keyword id="KW-0479">Metal-binding</keyword>
<keyword id="KW-1185">Reference proteome</keyword>
<keyword id="KW-0915">Sodium</keyword>
<keyword id="KW-0739">Sodium transport</keyword>
<keyword id="KW-0812">Transmembrane</keyword>
<keyword id="KW-1133">Transmembrane helix</keyword>
<keyword id="KW-0813">Transport</keyword>
<protein>
    <recommendedName>
        <fullName evidence="3">Bicarbonate transporter BicA</fullName>
    </recommendedName>
</protein>
<proteinExistence type="evidence at protein level"/>
<name>BICA_SYNY3</name>
<feature type="chain" id="PRO_0000449604" description="Bicarbonate transporter BicA">
    <location>
        <begin position="1"/>
        <end position="564"/>
    </location>
</feature>
<feature type="topological domain" description="Cytoplasmic" evidence="2">
    <location>
        <begin position="1"/>
        <end position="11"/>
    </location>
</feature>
<feature type="transmembrane region" description="Helical" evidence="2">
    <location>
        <begin position="12"/>
        <end position="37"/>
    </location>
</feature>
<feature type="topological domain" description="Periplasmic" evidence="2">
    <location>
        <begin position="38"/>
        <end position="40"/>
    </location>
</feature>
<feature type="transmembrane region" description="Helical" evidence="2">
    <location>
        <begin position="41"/>
        <end position="58"/>
    </location>
</feature>
<feature type="topological domain" description="Cytoplasmic" evidence="2">
    <location>
        <begin position="59"/>
        <end position="70"/>
    </location>
</feature>
<feature type="transmembrane region" description="Helical" evidence="2">
    <location>
        <begin position="71"/>
        <end position="86"/>
    </location>
</feature>
<feature type="topological domain" description="Periplasmic" evidence="2">
    <location>
        <begin position="87"/>
        <end position="90"/>
    </location>
</feature>
<feature type="transmembrane region" description="Helical" evidence="2">
    <location>
        <begin position="91"/>
        <end position="112"/>
    </location>
</feature>
<feature type="topological domain" description="Cytoplasmic" evidence="2">
    <location>
        <begin position="113"/>
        <end position="122"/>
    </location>
</feature>
<feature type="transmembrane region" description="Helical" evidence="2">
    <location>
        <begin position="123"/>
        <end position="145"/>
    </location>
</feature>
<feature type="topological domain" description="Periplasmic" evidence="2">
    <location>
        <begin position="146"/>
        <end position="170"/>
    </location>
</feature>
<feature type="transmembrane region" description="Helical" evidence="2">
    <location>
        <begin position="171"/>
        <end position="185"/>
    </location>
</feature>
<feature type="topological domain" description="Cytoplasmic" evidence="2">
    <location>
        <begin position="186"/>
        <end position="196"/>
    </location>
</feature>
<feature type="transmembrane region" description="Helical" evidence="2">
    <location>
        <begin position="197"/>
        <end position="211"/>
    </location>
</feature>
<feature type="topological domain" description="Periplasmic" evidence="2">
    <location>
        <begin position="212"/>
        <end position="240"/>
    </location>
</feature>
<feature type="transmembrane region" description="Helical" evidence="2">
    <location>
        <begin position="241"/>
        <end position="269"/>
    </location>
</feature>
<feature type="topological domain" description="Cytoplasmic" evidence="2">
    <location>
        <begin position="270"/>
        <end position="275"/>
    </location>
</feature>
<feature type="transmembrane region" description="Helical" evidence="2">
    <location>
        <begin position="276"/>
        <end position="292"/>
    </location>
</feature>
<feature type="topological domain" description="Periplasmic" evidence="2">
    <location>
        <begin position="293"/>
        <end position="302"/>
    </location>
</feature>
<feature type="transmembrane region" description="Helical" evidence="2">
    <location>
        <begin position="303"/>
        <end position="312"/>
    </location>
</feature>
<feature type="topological domain" description="Cytoplasmic" evidence="2">
    <location>
        <begin position="313"/>
        <end position="315"/>
    </location>
</feature>
<feature type="transmembrane region" description="Helical" evidence="2">
    <location>
        <begin position="316"/>
        <end position="338"/>
    </location>
</feature>
<feature type="topological domain" description="Periplasmic" evidence="2">
    <location>
        <begin position="339"/>
        <end position="341"/>
    </location>
</feature>
<feature type="transmembrane region" description="Helical" evidence="2">
    <location>
        <begin position="342"/>
        <end position="357"/>
    </location>
</feature>
<feature type="topological domain" description="Cytoplasmic" evidence="2">
    <location>
        <begin position="358"/>
        <end position="369"/>
    </location>
</feature>
<feature type="transmembrane region" description="Helical" evidence="2">
    <location>
        <begin position="370"/>
        <end position="390"/>
    </location>
</feature>
<feature type="topological domain" description="Periplasmic" evidence="2">
    <location>
        <begin position="391"/>
        <end position="392"/>
    </location>
</feature>
<feature type="transmembrane region" description="Helical" evidence="2">
    <location>
        <begin position="393"/>
        <end position="405"/>
    </location>
</feature>
<feature type="topological domain" description="Cytoplasmic" evidence="2">
    <location>
        <begin position="406"/>
        <end position="564"/>
    </location>
</feature>
<feature type="domain" description="STAS" evidence="1">
    <location>
        <begin position="432"/>
        <end position="542"/>
    </location>
</feature>
<feature type="binding site" evidence="2 6">
    <location>
        <position position="69"/>
    </location>
    <ligand>
        <name>hydrogencarbonate</name>
        <dbReference type="ChEBI" id="CHEBI:17544"/>
    </ligand>
</feature>
<feature type="binding site" evidence="2 6">
    <location>
        <position position="258"/>
    </location>
    <ligand>
        <name>Na(+)</name>
        <dbReference type="ChEBI" id="CHEBI:29101"/>
    </ligand>
</feature>
<feature type="binding site" evidence="2 6">
    <location>
        <position position="262"/>
    </location>
    <ligand>
        <name>Na(+)</name>
        <dbReference type="ChEBI" id="CHEBI:29101"/>
    </ligand>
</feature>
<feature type="binding site" evidence="2 6">
    <location>
        <position position="300"/>
    </location>
    <ligand>
        <name>Na(+)</name>
        <dbReference type="ChEBI" id="CHEBI:29101"/>
    </ligand>
</feature>
<feature type="binding site" evidence="2 6">
    <location>
        <position position="301"/>
    </location>
    <ligand>
        <name>hydrogencarbonate</name>
        <dbReference type="ChEBI" id="CHEBI:17544"/>
    </ligand>
</feature>
<feature type="binding site" evidence="2 6">
    <location>
        <position position="302"/>
    </location>
    <ligand>
        <name>Na(+)</name>
        <dbReference type="ChEBI" id="CHEBI:29101"/>
    </ligand>
</feature>
<feature type="mutagenesis site" description="Alters bicarbonate transport." evidence="2">
    <original>T</original>
    <variation>A</variation>
    <location>
        <position position="69"/>
    </location>
</feature>
<feature type="mutagenesis site" description="Alters bicarbonate transport." evidence="2">
    <original>D</original>
    <variation>A</variation>
    <variation>E</variation>
    <location>
        <position position="258"/>
    </location>
</feature>
<feature type="mutagenesis site" description="Alters bicarbonate transport." evidence="2">
    <original>T</original>
    <variation>A</variation>
    <location>
        <position position="262"/>
    </location>
</feature>
<feature type="mutagenesis site" description="Alters bicarbonate transport." evidence="2">
    <original>T</original>
    <variation>A</variation>
    <location>
        <position position="302"/>
    </location>
</feature>
<feature type="mutagenesis site" description="Alters bicarbonate transport." evidence="2">
    <original>A</original>
    <variation>N</variation>
    <location>
        <position position="471"/>
    </location>
</feature>
<feature type="mutagenesis site" description="Alters bicarbonate transport." evidence="2">
    <original>L</original>
    <variation>S</variation>
    <location>
        <position position="476"/>
    </location>
</feature>
<feature type="mutagenesis site" description="Alters bicarbonate transport." evidence="2">
    <original>A</original>
    <variation>E</variation>
    <location>
        <position position="486"/>
    </location>
</feature>
<feature type="mutagenesis site" description="Alters bicarbonate transport." evidence="2">
    <original>L</original>
    <variation>Q</variation>
    <location>
        <position position="490"/>
    </location>
</feature>
<feature type="helix" evidence="7">
    <location>
        <begin position="12"/>
        <end position="37"/>
    </location>
</feature>
<feature type="helix" evidence="7">
    <location>
        <begin position="42"/>
        <end position="58"/>
    </location>
</feature>
<feature type="helix" evidence="7">
    <location>
        <begin position="72"/>
        <end position="86"/>
    </location>
</feature>
<feature type="turn" evidence="7">
    <location>
        <begin position="88"/>
        <end position="90"/>
    </location>
</feature>
<feature type="helix" evidence="7">
    <location>
        <begin position="91"/>
        <end position="111"/>
    </location>
</feature>
<feature type="helix" evidence="7">
    <location>
        <begin position="115"/>
        <end position="119"/>
    </location>
</feature>
<feature type="helix" evidence="7">
    <location>
        <begin position="123"/>
        <end position="146"/>
    </location>
</feature>
<feature type="strand" evidence="7">
    <location>
        <begin position="152"/>
        <end position="156"/>
    </location>
</feature>
<feature type="helix" evidence="7">
    <location>
        <begin position="157"/>
        <end position="160"/>
    </location>
</feature>
<feature type="helix" evidence="7">
    <location>
        <begin position="164"/>
        <end position="166"/>
    </location>
</feature>
<feature type="helix" evidence="7">
    <location>
        <begin position="171"/>
        <end position="186"/>
    </location>
</feature>
<feature type="helix" evidence="7">
    <location>
        <begin position="190"/>
        <end position="192"/>
    </location>
</feature>
<feature type="helix" evidence="7">
    <location>
        <begin position="197"/>
        <end position="207"/>
    </location>
</feature>
<feature type="helix" evidence="7">
    <location>
        <begin position="208"/>
        <end position="210"/>
    </location>
</feature>
<feature type="helix" evidence="7">
    <location>
        <begin position="241"/>
        <end position="268"/>
    </location>
</feature>
<feature type="helix" evidence="7">
    <location>
        <begin position="276"/>
        <end position="291"/>
    </location>
</feature>
<feature type="turn" evidence="7">
    <location>
        <begin position="292"/>
        <end position="294"/>
    </location>
</feature>
<feature type="helix" evidence="7">
    <location>
        <begin position="304"/>
        <end position="310"/>
    </location>
</feature>
<feature type="helix" evidence="7">
    <location>
        <begin position="316"/>
        <end position="337"/>
    </location>
</feature>
<feature type="helix" evidence="7">
    <location>
        <begin position="342"/>
        <end position="356"/>
    </location>
</feature>
<feature type="helix" evidence="7">
    <location>
        <begin position="359"/>
        <end position="362"/>
    </location>
</feature>
<feature type="helix" evidence="7">
    <location>
        <begin position="370"/>
        <end position="390"/>
    </location>
</feature>
<feature type="strand" evidence="8">
    <location>
        <begin position="409"/>
        <end position="411"/>
    </location>
</feature>
<feature type="strand" evidence="8">
    <location>
        <begin position="414"/>
        <end position="419"/>
    </location>
</feature>
<feature type="helix" evidence="8">
    <location>
        <begin position="422"/>
        <end position="424"/>
    </location>
</feature>
<feature type="helix" evidence="8">
    <location>
        <begin position="429"/>
        <end position="437"/>
    </location>
</feature>
<feature type="turn" evidence="8">
    <location>
        <begin position="438"/>
        <end position="440"/>
    </location>
</feature>
<feature type="strand" evidence="8">
    <location>
        <begin position="441"/>
        <end position="449"/>
    </location>
</feature>
<feature type="helix" evidence="8">
    <location>
        <begin position="455"/>
        <end position="466"/>
    </location>
</feature>
<feature type="strand" evidence="8">
    <location>
        <begin position="470"/>
        <end position="478"/>
    </location>
</feature>
<feature type="helix" evidence="8">
    <location>
        <begin position="484"/>
        <end position="500"/>
    </location>
</feature>
<feature type="strand" evidence="8">
    <location>
        <begin position="503"/>
        <end position="507"/>
    </location>
</feature>
<feature type="helix" evidence="8">
    <location>
        <begin position="511"/>
        <end position="519"/>
    </location>
</feature>
<feature type="helix" evidence="8">
    <location>
        <begin position="522"/>
        <end position="524"/>
    </location>
</feature>
<feature type="helix" evidence="8">
    <location>
        <begin position="528"/>
        <end position="530"/>
    </location>
</feature>
<feature type="strand" evidence="8">
    <location>
        <begin position="531"/>
        <end position="533"/>
    </location>
</feature>
<feature type="helix" evidence="8">
    <location>
        <begin position="535"/>
        <end position="544"/>
    </location>
</feature>
<sequence length="564" mass="59049">MQITNKIHFRNLQGDLFGGVTAAVIALPMALAFGIASGAGATAGLWGAVIVGFFAALFGGTPTLISEPTGPMTVVQTAVIASLVAADPDNGLAMAFTVVMMAGLFQIAFGLLKLGKYVTMMPYTVISGFMSGIGIILVILQLAPFLGQASPKGGVIGTLQALPNLVSNVRPVETLLALMTVGIIWFMPSRWKKFAPPQLVALVLGTIISITLFGDLDIRRIGEIQAGLPALQLPVFQADQLQRMLIDAAVLGMLGCIDALLTSVVADSLTRTEHNSNKELVGQGIGNVMSGLFGGLGGAGATMGTVVNIQSGGRTALSGLIRAMVLLVVILGAAKLAATIPLAVLAGIAFKVGVDIIDWGFLKRAHHVSIKGALIMYAVIVLTVLVDLIAAVGIGVFIANILTIDRMSALQSKAVKSISDADDEILLSANEKRWLDEGNGRVLLFQLSGPMIFGVAKAIAREHNAIQECAAIVFDLSDVPHLGVTASLALENAIEEAAEKGRAVYIVGATGQTKRRLEKLQVFRFVPESNCYDDRSEALKDAVLALGPHESEDSPSSSSVQTTY</sequence>
<evidence type="ECO:0000255" key="1">
    <source>
        <dbReference type="PROSITE-ProRule" id="PRU00198"/>
    </source>
</evidence>
<evidence type="ECO:0000269" key="2">
    <source>
    </source>
</evidence>
<evidence type="ECO:0000303" key="3">
    <source>
    </source>
</evidence>
<evidence type="ECO:0000305" key="4"/>
<evidence type="ECO:0000312" key="5">
    <source>
        <dbReference type="EMBL" id="BAA10512.1"/>
    </source>
</evidence>
<evidence type="ECO:0007744" key="6">
    <source>
        <dbReference type="PDB" id="6KI1"/>
    </source>
</evidence>
<evidence type="ECO:0007829" key="7">
    <source>
        <dbReference type="PDB" id="6KI1"/>
    </source>
</evidence>
<evidence type="ECO:0007829" key="8">
    <source>
        <dbReference type="PDB" id="6KI2"/>
    </source>
</evidence>